<feature type="chain" id="PRO_0000196660" description="Phosphoenolpyruvate synthase regulatory protein">
    <location>
        <begin position="1"/>
        <end position="277"/>
    </location>
</feature>
<feature type="binding site" evidence="1">
    <location>
        <begin position="157"/>
        <end position="164"/>
    </location>
    <ligand>
        <name>ADP</name>
        <dbReference type="ChEBI" id="CHEBI:456216"/>
    </ligand>
</feature>
<accession>P0A8A6</accession>
<accession>P03822</accession>
<accession>P46137</accession>
<accession>P76203</accession>
<organism>
    <name type="scientific">Escherichia coli O157:H7</name>
    <dbReference type="NCBI Taxonomy" id="83334"/>
    <lineage>
        <taxon>Bacteria</taxon>
        <taxon>Pseudomonadati</taxon>
        <taxon>Pseudomonadota</taxon>
        <taxon>Gammaproteobacteria</taxon>
        <taxon>Enterobacterales</taxon>
        <taxon>Enterobacteriaceae</taxon>
        <taxon>Escherichia</taxon>
    </lineage>
</organism>
<comment type="function">
    <text evidence="1">Bifunctional serine/threonine kinase and phosphorylase involved in the regulation of the phosphoenolpyruvate synthase (PEPS) by catalyzing its phosphorylation/dephosphorylation.</text>
</comment>
<comment type="catalytic activity">
    <reaction evidence="1">
        <text>[pyruvate, water dikinase] + ADP = [pyruvate, water dikinase]-phosphate + AMP + H(+)</text>
        <dbReference type="Rhea" id="RHEA:46020"/>
        <dbReference type="Rhea" id="RHEA-COMP:11425"/>
        <dbReference type="Rhea" id="RHEA-COMP:11426"/>
        <dbReference type="ChEBI" id="CHEBI:15378"/>
        <dbReference type="ChEBI" id="CHEBI:43176"/>
        <dbReference type="ChEBI" id="CHEBI:68546"/>
        <dbReference type="ChEBI" id="CHEBI:456215"/>
        <dbReference type="ChEBI" id="CHEBI:456216"/>
        <dbReference type="EC" id="2.7.11.33"/>
    </reaction>
</comment>
<comment type="catalytic activity">
    <reaction evidence="1">
        <text>[pyruvate, water dikinase]-phosphate + phosphate + H(+) = [pyruvate, water dikinase] + diphosphate</text>
        <dbReference type="Rhea" id="RHEA:48580"/>
        <dbReference type="Rhea" id="RHEA-COMP:11425"/>
        <dbReference type="Rhea" id="RHEA-COMP:11426"/>
        <dbReference type="ChEBI" id="CHEBI:15378"/>
        <dbReference type="ChEBI" id="CHEBI:33019"/>
        <dbReference type="ChEBI" id="CHEBI:43176"/>
        <dbReference type="ChEBI" id="CHEBI:43474"/>
        <dbReference type="ChEBI" id="CHEBI:68546"/>
        <dbReference type="EC" id="2.7.4.28"/>
    </reaction>
</comment>
<comment type="similarity">
    <text evidence="1">Belongs to the pyruvate, phosphate/water dikinase regulatory protein family. PSRP subfamily.</text>
</comment>
<reference key="1">
    <citation type="journal article" date="2001" name="Nature">
        <title>Genome sequence of enterohaemorrhagic Escherichia coli O157:H7.</title>
        <authorList>
            <person name="Perna N.T."/>
            <person name="Plunkett G. III"/>
            <person name="Burland V."/>
            <person name="Mau B."/>
            <person name="Glasner J.D."/>
            <person name="Rose D.J."/>
            <person name="Mayhew G.F."/>
            <person name="Evans P.S."/>
            <person name="Gregor J."/>
            <person name="Kirkpatrick H.A."/>
            <person name="Posfai G."/>
            <person name="Hackett J."/>
            <person name="Klink S."/>
            <person name="Boutin A."/>
            <person name="Shao Y."/>
            <person name="Miller L."/>
            <person name="Grotbeck E.J."/>
            <person name="Davis N.W."/>
            <person name="Lim A."/>
            <person name="Dimalanta E.T."/>
            <person name="Potamousis K."/>
            <person name="Apodaca J."/>
            <person name="Anantharaman T.S."/>
            <person name="Lin J."/>
            <person name="Yen G."/>
            <person name="Schwartz D.C."/>
            <person name="Welch R.A."/>
            <person name="Blattner F.R."/>
        </authorList>
    </citation>
    <scope>NUCLEOTIDE SEQUENCE [LARGE SCALE GENOMIC DNA]</scope>
    <source>
        <strain>O157:H7 / EDL933 / ATCC 700927 / EHEC</strain>
    </source>
</reference>
<reference key="2">
    <citation type="journal article" date="2001" name="DNA Res.">
        <title>Complete genome sequence of enterohemorrhagic Escherichia coli O157:H7 and genomic comparison with a laboratory strain K-12.</title>
        <authorList>
            <person name="Hayashi T."/>
            <person name="Makino K."/>
            <person name="Ohnishi M."/>
            <person name="Kurokawa K."/>
            <person name="Ishii K."/>
            <person name="Yokoyama K."/>
            <person name="Han C.-G."/>
            <person name="Ohtsubo E."/>
            <person name="Nakayama K."/>
            <person name="Murata T."/>
            <person name="Tanaka M."/>
            <person name="Tobe T."/>
            <person name="Iida T."/>
            <person name="Takami H."/>
            <person name="Honda T."/>
            <person name="Sasakawa C."/>
            <person name="Ogasawara N."/>
            <person name="Yasunaga T."/>
            <person name="Kuhara S."/>
            <person name="Shiba T."/>
            <person name="Hattori M."/>
            <person name="Shinagawa H."/>
        </authorList>
    </citation>
    <scope>NUCLEOTIDE SEQUENCE [LARGE SCALE GENOMIC DNA]</scope>
    <source>
        <strain>O157:H7 / Sakai / RIMD 0509952 / EHEC</strain>
    </source>
</reference>
<gene>
    <name evidence="1" type="primary">ppsR</name>
    <name type="ordered locus">Z2732</name>
    <name type="ordered locus">ECs2410</name>
</gene>
<sequence>MDNAVDRHVFYISDGTAITAEVLGHAVMSQFPVTISSITLPFVENESRARAVKDQIDAIYHQTGVRPLVFYSIVLPEIRAIILQSEGFCQDIVQALVAPLQQEMKLDPTPIAHRTHGLNPNNLNKYDARIAAIDYTLAHDDGISLRNLDQAQVILLGVSRCGKTPTSLYLAMQFGIRAANYPFIADDMDNLVLPASLKPLQHKLFGLTIDPERLAAIREERRENSRYASLRQCRMEVAEVEALYRKNQIPWINSTNYSVEEIATKILDIMGLSRRMY</sequence>
<dbReference type="EC" id="2.7.11.33" evidence="1"/>
<dbReference type="EC" id="2.7.4.28" evidence="1"/>
<dbReference type="EMBL" id="AE005174">
    <property type="protein sequence ID" value="AAG56690.1"/>
    <property type="molecule type" value="Genomic_DNA"/>
</dbReference>
<dbReference type="EMBL" id="BA000007">
    <property type="protein sequence ID" value="BAB35833.1"/>
    <property type="molecule type" value="Genomic_DNA"/>
</dbReference>
<dbReference type="PIR" id="B90930">
    <property type="entry name" value="B90930"/>
</dbReference>
<dbReference type="PIR" id="F85778">
    <property type="entry name" value="F85778"/>
</dbReference>
<dbReference type="RefSeq" id="NP_310437.1">
    <property type="nucleotide sequence ID" value="NC_002695.1"/>
</dbReference>
<dbReference type="RefSeq" id="WP_000368046.1">
    <property type="nucleotide sequence ID" value="NZ_VOAI01000007.1"/>
</dbReference>
<dbReference type="SMR" id="P0A8A6"/>
<dbReference type="STRING" id="155864.Z2732"/>
<dbReference type="GeneID" id="914043"/>
<dbReference type="GeneID" id="93775866"/>
<dbReference type="KEGG" id="ece:Z2732"/>
<dbReference type="KEGG" id="ecs:ECs_2410"/>
<dbReference type="PATRIC" id="fig|386585.9.peg.2524"/>
<dbReference type="eggNOG" id="COG1806">
    <property type="taxonomic scope" value="Bacteria"/>
</dbReference>
<dbReference type="HOGENOM" id="CLU_046206_1_0_6"/>
<dbReference type="OMA" id="YAQCEFE"/>
<dbReference type="Proteomes" id="UP000000558">
    <property type="component" value="Chromosome"/>
</dbReference>
<dbReference type="Proteomes" id="UP000002519">
    <property type="component" value="Chromosome"/>
</dbReference>
<dbReference type="GO" id="GO:0043531">
    <property type="term" value="F:ADP binding"/>
    <property type="evidence" value="ECO:0007669"/>
    <property type="project" value="UniProtKB-UniRule"/>
</dbReference>
<dbReference type="GO" id="GO:0005524">
    <property type="term" value="F:ATP binding"/>
    <property type="evidence" value="ECO:0007669"/>
    <property type="project" value="InterPro"/>
</dbReference>
<dbReference type="GO" id="GO:0016776">
    <property type="term" value="F:phosphotransferase activity, phosphate group as acceptor"/>
    <property type="evidence" value="ECO:0007669"/>
    <property type="project" value="UniProtKB-UniRule"/>
</dbReference>
<dbReference type="GO" id="GO:0004674">
    <property type="term" value="F:protein serine/threonine kinase activity"/>
    <property type="evidence" value="ECO:0007669"/>
    <property type="project" value="UniProtKB-UniRule"/>
</dbReference>
<dbReference type="HAMAP" id="MF_01062">
    <property type="entry name" value="PSRP"/>
    <property type="match status" value="1"/>
</dbReference>
<dbReference type="InterPro" id="IPR005177">
    <property type="entry name" value="Kinase-pyrophosphorylase"/>
</dbReference>
<dbReference type="InterPro" id="IPR026530">
    <property type="entry name" value="PSRP"/>
</dbReference>
<dbReference type="NCBIfam" id="NF003742">
    <property type="entry name" value="PRK05339.1"/>
    <property type="match status" value="1"/>
</dbReference>
<dbReference type="PANTHER" id="PTHR31756">
    <property type="entry name" value="PYRUVATE, PHOSPHATE DIKINASE REGULATORY PROTEIN 1, CHLOROPLASTIC"/>
    <property type="match status" value="1"/>
</dbReference>
<dbReference type="PANTHER" id="PTHR31756:SF3">
    <property type="entry name" value="PYRUVATE, PHOSPHATE DIKINASE REGULATORY PROTEIN 1, CHLOROPLASTIC"/>
    <property type="match status" value="1"/>
</dbReference>
<dbReference type="Pfam" id="PF03618">
    <property type="entry name" value="Kinase-PPPase"/>
    <property type="match status" value="1"/>
</dbReference>
<proteinExistence type="inferred from homology"/>
<keyword id="KW-0418">Kinase</keyword>
<keyword id="KW-0547">Nucleotide-binding</keyword>
<keyword id="KW-1185">Reference proteome</keyword>
<keyword id="KW-0723">Serine/threonine-protein kinase</keyword>
<keyword id="KW-0808">Transferase</keyword>
<name>PSRP_ECO57</name>
<evidence type="ECO:0000255" key="1">
    <source>
        <dbReference type="HAMAP-Rule" id="MF_01062"/>
    </source>
</evidence>
<protein>
    <recommendedName>
        <fullName evidence="1">Phosphoenolpyruvate synthase regulatory protein</fullName>
        <shortName evidence="1">PEP synthase regulatory protein</shortName>
        <shortName evidence="1">PSRP</shortName>
        <ecNumber evidence="1">2.7.11.33</ecNumber>
        <ecNumber evidence="1">2.7.4.28</ecNumber>
    </recommendedName>
    <alternativeName>
        <fullName evidence="1">Pyruvate, water dikinase regulatory protein</fullName>
    </alternativeName>
</protein>